<proteinExistence type="evidence at protein level"/>
<keyword id="KW-0002">3D-structure</keyword>
<keyword id="KW-0027">Amidation</keyword>
<keyword id="KW-0878">Amphibian defense peptide</keyword>
<keyword id="KW-0044">Antibiotic</keyword>
<keyword id="KW-0929">Antimicrobial</keyword>
<keyword id="KW-0903">Direct protein sequencing</keyword>
<keyword id="KW-0295">Fungicide</keyword>
<keyword id="KW-0964">Secreted</keyword>
<feature type="peptide" id="PRO_0000043803" description="Hylaseptin-P1">
    <location>
        <begin position="1"/>
        <end position="14"/>
    </location>
</feature>
<feature type="modified residue" description="Glycine amide" evidence="2">
    <location>
        <position position="14"/>
    </location>
</feature>
<feature type="helix" evidence="4">
    <location>
        <begin position="2"/>
        <end position="13"/>
    </location>
</feature>
<protein>
    <recommendedName>
        <fullName>Hylaseptin-P1</fullName>
        <shortName>HSP1</shortName>
    </recommendedName>
</protein>
<accession>P84292</accession>
<sequence>GILDAIKAIAKAAG</sequence>
<comment type="function">
    <text evidence="1 2">Has antibacterial activity against the Gram-positive bacterium S.aureus, and the Gram-negative bacteria P.aeruginosa and E.coli. Has antifungal activity against C.albicans. No hemolytic activity has been detected.</text>
</comment>
<comment type="subcellular location">
    <subcellularLocation>
        <location evidence="1 2">Secreted</location>
    </subcellularLocation>
</comment>
<comment type="tissue specificity">
    <text evidence="1 2">Expressed by the skin glands.</text>
</comment>
<comment type="mass spectrometry"/>
<evidence type="ECO:0000269" key="1">
    <source>
    </source>
</evidence>
<evidence type="ECO:0000269" key="2">
    <source ref="2"/>
</evidence>
<evidence type="ECO:0000305" key="3"/>
<evidence type="ECO:0007829" key="4">
    <source>
        <dbReference type="PDB" id="6WPB"/>
    </source>
</evidence>
<reference evidence="3" key="1">
    <citation type="journal article" date="2004" name="J. Biol. Chem.">
        <title>The NMR-derived solution structure of a new cationic antimicrobial peptide from the skin secretion of the anuran Hyla punctata.</title>
        <authorList>
            <person name="Prates M.V."/>
            <person name="Sforca M.L."/>
            <person name="Regis W.C.B."/>
            <person name="Leite J.R.S.A."/>
            <person name="Silva L.P."/>
            <person name="Pertinhez T.A."/>
            <person name="Araujo A.L.T."/>
            <person name="Azevedo R.B."/>
            <person name="Spisni A."/>
            <person name="Bloch C. Jr."/>
        </authorList>
    </citation>
    <scope>PROTEIN SEQUENCE</scope>
    <scope>FUNCTION</scope>
    <scope>SUBCELLULAR LOCATION</scope>
    <scope>TISSUE SPECIFICITY</scope>
    <scope>STRUCTURE BY NMR</scope>
    <source>
        <tissue evidence="1">Skin secretion</tissue>
    </source>
</reference>
<reference evidence="3" key="2">
    <citation type="thesis" date="2003" institute="University of Brasilia" country="Brazil">
        <title>Bioactive peptides from the anuran Hyla punctata.</title>
        <authorList>
            <person name="Prates M.V."/>
        </authorList>
    </citation>
    <scope>PROTEIN SEQUENCE</scope>
    <scope>FUNCTION</scope>
    <scope>SUBCELLULAR LOCATION</scope>
    <scope>TISSUE SPECIFICITY</scope>
    <scope>MASS SPECTROMETRY</scope>
    <scope>AMIDATION AT GLY-14</scope>
    <source>
        <tissue evidence="2">Skin secretion</tissue>
    </source>
</reference>
<dbReference type="PDB" id="6WPB">
    <property type="method" value="NMR"/>
    <property type="chains" value="A=1-14"/>
</dbReference>
<dbReference type="PDB" id="6WPD">
    <property type="method" value="NMR"/>
    <property type="chains" value="A=1-14"/>
</dbReference>
<dbReference type="PDBsum" id="6WPB"/>
<dbReference type="PDBsum" id="6WPD"/>
<dbReference type="BMRB" id="P84292"/>
<dbReference type="SMR" id="P84292"/>
<dbReference type="GO" id="GO:0005576">
    <property type="term" value="C:extracellular region"/>
    <property type="evidence" value="ECO:0007669"/>
    <property type="project" value="UniProtKB-SubCell"/>
</dbReference>
<dbReference type="GO" id="GO:0042742">
    <property type="term" value="P:defense response to bacterium"/>
    <property type="evidence" value="ECO:0007669"/>
    <property type="project" value="UniProtKB-KW"/>
</dbReference>
<dbReference type="GO" id="GO:0050832">
    <property type="term" value="P:defense response to fungus"/>
    <property type="evidence" value="ECO:0007669"/>
    <property type="project" value="UniProtKB-KW"/>
</dbReference>
<dbReference type="GO" id="GO:0031640">
    <property type="term" value="P:killing of cells of another organism"/>
    <property type="evidence" value="ECO:0007669"/>
    <property type="project" value="UniProtKB-KW"/>
</dbReference>
<organism>
    <name type="scientific">Boana punctata</name>
    <name type="common">Polka-dot tree frog</name>
    <name type="synonym">Hypsiboas punctatus</name>
    <dbReference type="NCBI Taxonomy" id="2499473"/>
    <lineage>
        <taxon>Eukaryota</taxon>
        <taxon>Metazoa</taxon>
        <taxon>Chordata</taxon>
        <taxon>Craniata</taxon>
        <taxon>Vertebrata</taxon>
        <taxon>Euteleostomi</taxon>
        <taxon>Amphibia</taxon>
        <taxon>Batrachia</taxon>
        <taxon>Anura</taxon>
        <taxon>Neobatrachia</taxon>
        <taxon>Hyloidea</taxon>
        <taxon>Hylidae</taxon>
        <taxon>Hylinae</taxon>
        <taxon>Cophomantini</taxon>
        <taxon>Boana</taxon>
    </lineage>
</organism>
<name>HLP1_BOAPU</name>